<reference key="1">
    <citation type="submission" date="2007-08" db="EMBL/GenBank/DDBJ databases">
        <title>Complete sequence of Thermotoga lettingae TMO.</title>
        <authorList>
            <consortium name="US DOE Joint Genome Institute"/>
            <person name="Copeland A."/>
            <person name="Lucas S."/>
            <person name="Lapidus A."/>
            <person name="Barry K."/>
            <person name="Glavina del Rio T."/>
            <person name="Dalin E."/>
            <person name="Tice H."/>
            <person name="Pitluck S."/>
            <person name="Foster B."/>
            <person name="Bruce D."/>
            <person name="Schmutz J."/>
            <person name="Larimer F."/>
            <person name="Land M."/>
            <person name="Hauser L."/>
            <person name="Kyrpides N."/>
            <person name="Mikhailova N."/>
            <person name="Nelson K."/>
            <person name="Gogarten J.P."/>
            <person name="Noll K."/>
            <person name="Richardson P."/>
        </authorList>
    </citation>
    <scope>NUCLEOTIDE SEQUENCE [LARGE SCALE GENOMIC DNA]</scope>
    <source>
        <strain>ATCC BAA-301 / DSM 14385 / NBRC 107922 / TMO</strain>
    </source>
</reference>
<keyword id="KW-0963">Cytoplasm</keyword>
<keyword id="KW-0238">DNA-binding</keyword>
<keyword id="KW-1185">Reference proteome</keyword>
<protein>
    <recommendedName>
        <fullName evidence="1">Nucleoid-associated protein Tlet_0999</fullName>
    </recommendedName>
</protein>
<dbReference type="EMBL" id="CP000812">
    <property type="protein sequence ID" value="ABV33565.1"/>
    <property type="molecule type" value="Genomic_DNA"/>
</dbReference>
<dbReference type="RefSeq" id="WP_012003046.1">
    <property type="nucleotide sequence ID" value="NZ_BSDV01000001.1"/>
</dbReference>
<dbReference type="SMR" id="A8F5Y1"/>
<dbReference type="STRING" id="416591.Tlet_0999"/>
<dbReference type="KEGG" id="tle:Tlet_0999"/>
<dbReference type="eggNOG" id="COG0718">
    <property type="taxonomic scope" value="Bacteria"/>
</dbReference>
<dbReference type="HOGENOM" id="CLU_140930_1_0_0"/>
<dbReference type="OrthoDB" id="47063at2"/>
<dbReference type="Proteomes" id="UP000002016">
    <property type="component" value="Chromosome"/>
</dbReference>
<dbReference type="GO" id="GO:0043590">
    <property type="term" value="C:bacterial nucleoid"/>
    <property type="evidence" value="ECO:0007669"/>
    <property type="project" value="UniProtKB-UniRule"/>
</dbReference>
<dbReference type="GO" id="GO:0005829">
    <property type="term" value="C:cytosol"/>
    <property type="evidence" value="ECO:0007669"/>
    <property type="project" value="TreeGrafter"/>
</dbReference>
<dbReference type="GO" id="GO:0003677">
    <property type="term" value="F:DNA binding"/>
    <property type="evidence" value="ECO:0007669"/>
    <property type="project" value="UniProtKB-UniRule"/>
</dbReference>
<dbReference type="Gene3D" id="3.30.1310.10">
    <property type="entry name" value="Nucleoid-associated protein YbaB-like domain"/>
    <property type="match status" value="1"/>
</dbReference>
<dbReference type="HAMAP" id="MF_00274">
    <property type="entry name" value="DNA_YbaB_EbfC"/>
    <property type="match status" value="1"/>
</dbReference>
<dbReference type="InterPro" id="IPR036894">
    <property type="entry name" value="YbaB-like_sf"/>
</dbReference>
<dbReference type="InterPro" id="IPR004401">
    <property type="entry name" value="YbaB/EbfC"/>
</dbReference>
<dbReference type="NCBIfam" id="TIGR00103">
    <property type="entry name" value="DNA_YbaB_EbfC"/>
    <property type="match status" value="1"/>
</dbReference>
<dbReference type="PANTHER" id="PTHR33449">
    <property type="entry name" value="NUCLEOID-ASSOCIATED PROTEIN YBAB"/>
    <property type="match status" value="1"/>
</dbReference>
<dbReference type="PANTHER" id="PTHR33449:SF1">
    <property type="entry name" value="NUCLEOID-ASSOCIATED PROTEIN YBAB"/>
    <property type="match status" value="1"/>
</dbReference>
<dbReference type="Pfam" id="PF02575">
    <property type="entry name" value="YbaB_DNA_bd"/>
    <property type="match status" value="1"/>
</dbReference>
<dbReference type="SUPFAM" id="SSF82607">
    <property type="entry name" value="YbaB-like"/>
    <property type="match status" value="1"/>
</dbReference>
<sequence length="114" mass="12665">MKKIKGFGGKSYGKIDKSSGFEQIQQKMRDEIEKLENSFENIEVSSTSGGGAVKVTAKCNYEIVSIEYEDSLLEDREMFNDLIVAAINEALREVTKKREEELSKIVGLSGLPGL</sequence>
<comment type="function">
    <text evidence="1">Binds to DNA and alters its conformation. May be involved in regulation of gene expression, nucleoid organization and DNA protection.</text>
</comment>
<comment type="subunit">
    <text evidence="1">Homodimer.</text>
</comment>
<comment type="subcellular location">
    <subcellularLocation>
        <location evidence="1">Cytoplasm</location>
        <location evidence="1">Nucleoid</location>
    </subcellularLocation>
</comment>
<comment type="similarity">
    <text evidence="1">Belongs to the YbaB/EbfC family.</text>
</comment>
<organism>
    <name type="scientific">Pseudothermotoga lettingae (strain ATCC BAA-301 / DSM 14385 / NBRC 107922 / TMO)</name>
    <name type="common">Thermotoga lettingae</name>
    <dbReference type="NCBI Taxonomy" id="416591"/>
    <lineage>
        <taxon>Bacteria</taxon>
        <taxon>Thermotogati</taxon>
        <taxon>Thermotogota</taxon>
        <taxon>Thermotogae</taxon>
        <taxon>Thermotogales</taxon>
        <taxon>Thermotogaceae</taxon>
        <taxon>Pseudothermotoga</taxon>
    </lineage>
</organism>
<gene>
    <name type="ordered locus">Tlet_0999</name>
</gene>
<feature type="chain" id="PRO_1000059207" description="Nucleoid-associated protein Tlet_0999">
    <location>
        <begin position="1"/>
        <end position="114"/>
    </location>
</feature>
<proteinExistence type="inferred from homology"/>
<accession>A8F5Y1</accession>
<evidence type="ECO:0000255" key="1">
    <source>
        <dbReference type="HAMAP-Rule" id="MF_00274"/>
    </source>
</evidence>
<name>Y999_PSELT</name>